<feature type="chain" id="PRO_1000023152" description="Thymidylate kinase">
    <location>
        <begin position="1"/>
        <end position="226"/>
    </location>
</feature>
<feature type="binding site" evidence="1">
    <location>
        <begin position="20"/>
        <end position="27"/>
    </location>
    <ligand>
        <name>ATP</name>
        <dbReference type="ChEBI" id="CHEBI:30616"/>
    </ligand>
</feature>
<keyword id="KW-0067">ATP-binding</keyword>
<keyword id="KW-0418">Kinase</keyword>
<keyword id="KW-0545">Nucleotide biosynthesis</keyword>
<keyword id="KW-0547">Nucleotide-binding</keyword>
<keyword id="KW-1185">Reference proteome</keyword>
<keyword id="KW-0808">Transferase</keyword>
<evidence type="ECO:0000255" key="1">
    <source>
        <dbReference type="HAMAP-Rule" id="MF_00165"/>
    </source>
</evidence>
<sequence>MADVALKRGPGRGRFVTFEGGEGAGKSTQIKMLAARLESEGMRVVLTREPGGSPGAEIMRHLVLSGMGKLLGAEAETLLFAAARDDHVRNVILPALSQGSWVLCDRFFDSTRAYQGSLGKVAPDVLNAMQRVTIGDLKPDLTLILDVPVEVGLKRAAARRGAGAPDRFEAEDIKFHKGLRDAFHKIADDDPKRCVLIDATAGPDPVSLLVWDAVRERLFTAVAAAS</sequence>
<dbReference type="EC" id="2.7.4.9" evidence="1"/>
<dbReference type="EMBL" id="CP000494">
    <property type="protein sequence ID" value="ABQ36168.1"/>
    <property type="molecule type" value="Genomic_DNA"/>
</dbReference>
<dbReference type="RefSeq" id="WP_012044169.1">
    <property type="nucleotide sequence ID" value="NC_009485.1"/>
</dbReference>
<dbReference type="SMR" id="A5EJ24"/>
<dbReference type="STRING" id="288000.BBta_4102"/>
<dbReference type="KEGG" id="bbt:BBta_4102"/>
<dbReference type="eggNOG" id="COG0125">
    <property type="taxonomic scope" value="Bacteria"/>
</dbReference>
<dbReference type="HOGENOM" id="CLU_049131_0_0_5"/>
<dbReference type="OrthoDB" id="9774907at2"/>
<dbReference type="Proteomes" id="UP000000246">
    <property type="component" value="Chromosome"/>
</dbReference>
<dbReference type="GO" id="GO:0005829">
    <property type="term" value="C:cytosol"/>
    <property type="evidence" value="ECO:0007669"/>
    <property type="project" value="TreeGrafter"/>
</dbReference>
<dbReference type="GO" id="GO:0005524">
    <property type="term" value="F:ATP binding"/>
    <property type="evidence" value="ECO:0007669"/>
    <property type="project" value="UniProtKB-UniRule"/>
</dbReference>
<dbReference type="GO" id="GO:0004798">
    <property type="term" value="F:dTMP kinase activity"/>
    <property type="evidence" value="ECO:0007669"/>
    <property type="project" value="UniProtKB-UniRule"/>
</dbReference>
<dbReference type="GO" id="GO:0006233">
    <property type="term" value="P:dTDP biosynthetic process"/>
    <property type="evidence" value="ECO:0007669"/>
    <property type="project" value="InterPro"/>
</dbReference>
<dbReference type="GO" id="GO:0006235">
    <property type="term" value="P:dTTP biosynthetic process"/>
    <property type="evidence" value="ECO:0007669"/>
    <property type="project" value="UniProtKB-UniRule"/>
</dbReference>
<dbReference type="GO" id="GO:0006227">
    <property type="term" value="P:dUDP biosynthetic process"/>
    <property type="evidence" value="ECO:0007669"/>
    <property type="project" value="TreeGrafter"/>
</dbReference>
<dbReference type="CDD" id="cd01672">
    <property type="entry name" value="TMPK"/>
    <property type="match status" value="1"/>
</dbReference>
<dbReference type="FunFam" id="3.40.50.300:FF:000225">
    <property type="entry name" value="Thymidylate kinase"/>
    <property type="match status" value="1"/>
</dbReference>
<dbReference type="Gene3D" id="3.40.50.300">
    <property type="entry name" value="P-loop containing nucleotide triphosphate hydrolases"/>
    <property type="match status" value="1"/>
</dbReference>
<dbReference type="HAMAP" id="MF_00165">
    <property type="entry name" value="Thymidylate_kinase"/>
    <property type="match status" value="1"/>
</dbReference>
<dbReference type="InterPro" id="IPR027417">
    <property type="entry name" value="P-loop_NTPase"/>
</dbReference>
<dbReference type="InterPro" id="IPR039430">
    <property type="entry name" value="Thymidylate_kin-like_dom"/>
</dbReference>
<dbReference type="InterPro" id="IPR018095">
    <property type="entry name" value="Thymidylate_kin_CS"/>
</dbReference>
<dbReference type="InterPro" id="IPR018094">
    <property type="entry name" value="Thymidylate_kinase"/>
</dbReference>
<dbReference type="NCBIfam" id="TIGR00041">
    <property type="entry name" value="DTMP_kinase"/>
    <property type="match status" value="1"/>
</dbReference>
<dbReference type="PANTHER" id="PTHR10344">
    <property type="entry name" value="THYMIDYLATE KINASE"/>
    <property type="match status" value="1"/>
</dbReference>
<dbReference type="PANTHER" id="PTHR10344:SF4">
    <property type="entry name" value="UMP-CMP KINASE 2, MITOCHONDRIAL"/>
    <property type="match status" value="1"/>
</dbReference>
<dbReference type="Pfam" id="PF02223">
    <property type="entry name" value="Thymidylate_kin"/>
    <property type="match status" value="1"/>
</dbReference>
<dbReference type="SUPFAM" id="SSF52540">
    <property type="entry name" value="P-loop containing nucleoside triphosphate hydrolases"/>
    <property type="match status" value="1"/>
</dbReference>
<dbReference type="PROSITE" id="PS01331">
    <property type="entry name" value="THYMIDYLATE_KINASE"/>
    <property type="match status" value="1"/>
</dbReference>
<comment type="function">
    <text evidence="1">Phosphorylation of dTMP to form dTDP in both de novo and salvage pathways of dTTP synthesis.</text>
</comment>
<comment type="catalytic activity">
    <reaction evidence="1">
        <text>dTMP + ATP = dTDP + ADP</text>
        <dbReference type="Rhea" id="RHEA:13517"/>
        <dbReference type="ChEBI" id="CHEBI:30616"/>
        <dbReference type="ChEBI" id="CHEBI:58369"/>
        <dbReference type="ChEBI" id="CHEBI:63528"/>
        <dbReference type="ChEBI" id="CHEBI:456216"/>
        <dbReference type="EC" id="2.7.4.9"/>
    </reaction>
</comment>
<comment type="similarity">
    <text evidence="1">Belongs to the thymidylate kinase family.</text>
</comment>
<gene>
    <name evidence="1" type="primary">tmk</name>
    <name type="ordered locus">BBta_4102</name>
</gene>
<accession>A5EJ24</accession>
<protein>
    <recommendedName>
        <fullName evidence="1">Thymidylate kinase</fullName>
        <ecNumber evidence="1">2.7.4.9</ecNumber>
    </recommendedName>
    <alternativeName>
        <fullName evidence="1">dTMP kinase</fullName>
    </alternativeName>
</protein>
<name>KTHY_BRASB</name>
<reference key="1">
    <citation type="journal article" date="2007" name="Science">
        <title>Legumes symbioses: absence of nod genes in photosynthetic bradyrhizobia.</title>
        <authorList>
            <person name="Giraud E."/>
            <person name="Moulin L."/>
            <person name="Vallenet D."/>
            <person name="Barbe V."/>
            <person name="Cytryn E."/>
            <person name="Avarre J.-C."/>
            <person name="Jaubert M."/>
            <person name="Simon D."/>
            <person name="Cartieaux F."/>
            <person name="Prin Y."/>
            <person name="Bena G."/>
            <person name="Hannibal L."/>
            <person name="Fardoux J."/>
            <person name="Kojadinovic M."/>
            <person name="Vuillet L."/>
            <person name="Lajus A."/>
            <person name="Cruveiller S."/>
            <person name="Rouy Z."/>
            <person name="Mangenot S."/>
            <person name="Segurens B."/>
            <person name="Dossat C."/>
            <person name="Franck W.L."/>
            <person name="Chang W.-S."/>
            <person name="Saunders E."/>
            <person name="Bruce D."/>
            <person name="Richardson P."/>
            <person name="Normand P."/>
            <person name="Dreyfus B."/>
            <person name="Pignol D."/>
            <person name="Stacey G."/>
            <person name="Emerich D."/>
            <person name="Vermeglio A."/>
            <person name="Medigue C."/>
            <person name="Sadowsky M."/>
        </authorList>
    </citation>
    <scope>NUCLEOTIDE SEQUENCE [LARGE SCALE GENOMIC DNA]</scope>
    <source>
        <strain>BTAi1 / ATCC BAA-1182</strain>
    </source>
</reference>
<organism>
    <name type="scientific">Bradyrhizobium sp. (strain BTAi1 / ATCC BAA-1182)</name>
    <dbReference type="NCBI Taxonomy" id="288000"/>
    <lineage>
        <taxon>Bacteria</taxon>
        <taxon>Pseudomonadati</taxon>
        <taxon>Pseudomonadota</taxon>
        <taxon>Alphaproteobacteria</taxon>
        <taxon>Hyphomicrobiales</taxon>
        <taxon>Nitrobacteraceae</taxon>
        <taxon>Bradyrhizobium</taxon>
    </lineage>
</organism>
<proteinExistence type="inferred from homology"/>